<protein>
    <recommendedName>
        <fullName evidence="5">Glutamine synthetase</fullName>
        <shortName evidence="5">GS</shortName>
        <ecNumber evidence="5">6.3.1.2</ecNumber>
    </recommendedName>
    <alternativeName>
        <fullName evidence="5">Glutamate--ammonia ligase</fullName>
    </alternativeName>
    <alternativeName>
        <fullName evidence="5">Glutamine synthetase I alpha</fullName>
        <shortName evidence="5">GSI alpha</shortName>
    </alternativeName>
</protein>
<accession>P36687</accession>
<feature type="chain" id="PRO_0000153212" description="Glutamine synthetase">
    <location>
        <begin position="1"/>
        <end position="439"/>
    </location>
</feature>
<feature type="domain" description="GS beta-grasp" evidence="6">
    <location>
        <begin position="12"/>
        <end position="93"/>
    </location>
</feature>
<feature type="domain" description="GS catalytic" evidence="7">
    <location>
        <begin position="99"/>
        <end position="439"/>
    </location>
</feature>
<feature type="binding site" evidence="4">
    <location>
        <position position="122"/>
    </location>
    <ligand>
        <name>Mg(2+)</name>
        <dbReference type="ChEBI" id="CHEBI:18420"/>
        <label>1</label>
    </ligand>
</feature>
<feature type="binding site" evidence="4">
    <location>
        <position position="124"/>
    </location>
    <ligand>
        <name>Mg(2+)</name>
        <dbReference type="ChEBI" id="CHEBI:18420"/>
        <label>2</label>
    </ligand>
</feature>
<feature type="binding site" evidence="4">
    <location>
        <position position="172"/>
    </location>
    <ligand>
        <name>ATP</name>
        <dbReference type="ChEBI" id="CHEBI:30616"/>
    </ligand>
</feature>
<feature type="binding site" evidence="4">
    <location>
        <position position="177"/>
    </location>
    <ligand>
        <name>Mg(2+)</name>
        <dbReference type="ChEBI" id="CHEBI:18420"/>
        <label>2</label>
    </ligand>
</feature>
<feature type="binding site" evidence="4">
    <location>
        <position position="184"/>
    </location>
    <ligand>
        <name>Mg(2+)</name>
        <dbReference type="ChEBI" id="CHEBI:18420"/>
        <label>2</label>
    </ligand>
</feature>
<feature type="binding site" evidence="2">
    <location>
        <position position="229"/>
    </location>
    <ligand>
        <name>L-glutamate</name>
        <dbReference type="ChEBI" id="CHEBI:29985"/>
    </ligand>
</feature>
<feature type="binding site" evidence="4">
    <location>
        <position position="233"/>
    </location>
    <ligand>
        <name>Mg(2+)</name>
        <dbReference type="ChEBI" id="CHEBI:18420"/>
        <label>1</label>
    </ligand>
</feature>
<feature type="binding site" evidence="4">
    <location>
        <begin position="235"/>
        <end position="237"/>
    </location>
    <ligand>
        <name>ATP</name>
        <dbReference type="ChEBI" id="CHEBI:30616"/>
    </ligand>
</feature>
<feature type="binding site" evidence="3">
    <location>
        <position position="237"/>
    </location>
    <ligand>
        <name>ATP</name>
        <dbReference type="ChEBI" id="CHEBI:30616"/>
    </ligand>
</feature>
<feature type="binding site" evidence="4">
    <location>
        <position position="283"/>
    </location>
    <ligand>
        <name>L-glutamate</name>
        <dbReference type="ChEBI" id="CHEBI:29985"/>
    </ligand>
</feature>
<feature type="binding site" evidence="1">
    <location>
        <position position="289"/>
    </location>
    <ligand>
        <name>L-glutamate</name>
        <dbReference type="ChEBI" id="CHEBI:29985"/>
    </ligand>
</feature>
<feature type="binding site" evidence="4">
    <location>
        <position position="301"/>
    </location>
    <ligand>
        <name>ATP</name>
        <dbReference type="ChEBI" id="CHEBI:30616"/>
    </ligand>
</feature>
<feature type="binding site" evidence="4">
    <location>
        <position position="301"/>
    </location>
    <ligand>
        <name>L-glutamate</name>
        <dbReference type="ChEBI" id="CHEBI:29985"/>
    </ligand>
</feature>
<feature type="binding site" evidence="4">
    <location>
        <position position="306"/>
    </location>
    <ligand>
        <name>ATP</name>
        <dbReference type="ChEBI" id="CHEBI:30616"/>
    </ligand>
</feature>
<feature type="binding site" evidence="3">
    <location>
        <position position="313"/>
    </location>
    <ligand>
        <name>ATP</name>
        <dbReference type="ChEBI" id="CHEBI:30616"/>
    </ligand>
</feature>
<feature type="binding site" evidence="4">
    <location>
        <position position="318"/>
    </location>
    <ligand>
        <name>Mg(2+)</name>
        <dbReference type="ChEBI" id="CHEBI:18420"/>
        <label>1</label>
    </ligand>
</feature>
<feature type="binding site" evidence="4">
    <location>
        <position position="320"/>
    </location>
    <ligand>
        <name>L-glutamate</name>
        <dbReference type="ChEBI" id="CHEBI:29985"/>
    </ligand>
</feature>
<reference key="1">
    <citation type="journal article" date="1993" name="J. Bacteriol.">
        <title>Cloning and sequencing of the gene encoding glutamine synthetase I from the archaeum Pyrococcus woesei: anomalous phylogenies inferred from analysis of archaeal and bacterial glutamine synthetase I sequences.</title>
        <authorList>
            <person name="Tiboni O."/>
            <person name="Cammarano P."/>
            <person name="Sanangelantoni A.M."/>
        </authorList>
    </citation>
    <scope>NUCLEOTIDE SEQUENCE [GENOMIC DNA]</scope>
</reference>
<proteinExistence type="inferred from homology"/>
<keyword id="KW-0067">ATP-binding</keyword>
<keyword id="KW-0963">Cytoplasm</keyword>
<keyword id="KW-0436">Ligase</keyword>
<keyword id="KW-0460">Magnesium</keyword>
<keyword id="KW-0479">Metal-binding</keyword>
<keyword id="KW-0547">Nucleotide-binding</keyword>
<name>GLNA_PYRWO</name>
<gene>
    <name evidence="5" type="primary">glnA</name>
</gene>
<organism>
    <name type="scientific">Pyrococcus woesei</name>
    <dbReference type="NCBI Taxonomy" id="2262"/>
    <lineage>
        <taxon>Archaea</taxon>
        <taxon>Methanobacteriati</taxon>
        <taxon>Methanobacteriota</taxon>
        <taxon>Thermococci</taxon>
        <taxon>Thermococcales</taxon>
        <taxon>Thermococcaceae</taxon>
        <taxon>Pyrococcus</taxon>
    </lineage>
</organism>
<sequence>MNISVSMNKFDSKIKFVQLVFVDINGMPKGMEIPASRLEEAVTDGISFDGSSVPGFQGIEDSDLVFKADPDTYVEVPWDNVARVYGFIYKDNKPYGADPRGILKRALEELEKEGYKAYIGPEPEFYLFKKNGTWELEIPDVGGYFDILTLDKARDIRREIAEYMPSFGLIPEVLHHEVGKAQHEIDFRYDEALKTADNIVSFKYITKAVAEMHGLYATFMPKPLFGFPGNGMHLHISLSKDGENVFMGEEGLSEIALHFIGGILKHAKALIAVTNPTVNSYKRLVPGYEAPVYISWGYRNRSALIRVPAFWGKGARIEYRCPDPSANPYFAFAAVLKAGLDGIKHKIDPFAYVEENVYEMSEEKRKELGIETLPGSLGEALEELEKDKVVKEALGDAYKNFINYKWKEWESYLEYLEEKHMPKDTKKVTEWELERYFFL</sequence>
<dbReference type="EC" id="6.3.1.2" evidence="5"/>
<dbReference type="EMBL" id="X60161">
    <property type="protein sequence ID" value="CAA42730.1"/>
    <property type="molecule type" value="Genomic_DNA"/>
</dbReference>
<dbReference type="PIR" id="A36911">
    <property type="entry name" value="A36911"/>
</dbReference>
<dbReference type="SMR" id="P36687"/>
<dbReference type="BRENDA" id="6.3.1.2">
    <property type="organism ID" value="5249"/>
</dbReference>
<dbReference type="GO" id="GO:0005737">
    <property type="term" value="C:cytoplasm"/>
    <property type="evidence" value="ECO:0007669"/>
    <property type="project" value="UniProtKB-SubCell"/>
</dbReference>
<dbReference type="GO" id="GO:0005524">
    <property type="term" value="F:ATP binding"/>
    <property type="evidence" value="ECO:0007669"/>
    <property type="project" value="UniProtKB-KW"/>
</dbReference>
<dbReference type="GO" id="GO:0004356">
    <property type="term" value="F:glutamine synthetase activity"/>
    <property type="evidence" value="ECO:0007669"/>
    <property type="project" value="UniProtKB-EC"/>
</dbReference>
<dbReference type="GO" id="GO:0046872">
    <property type="term" value="F:metal ion binding"/>
    <property type="evidence" value="ECO:0007669"/>
    <property type="project" value="UniProtKB-KW"/>
</dbReference>
<dbReference type="GO" id="GO:0006542">
    <property type="term" value="P:glutamine biosynthetic process"/>
    <property type="evidence" value="ECO:0007669"/>
    <property type="project" value="InterPro"/>
</dbReference>
<dbReference type="FunFam" id="3.30.590.10:FF:000003">
    <property type="entry name" value="Glutamine synthetase 2"/>
    <property type="match status" value="1"/>
</dbReference>
<dbReference type="Gene3D" id="3.10.20.70">
    <property type="entry name" value="Glutamine synthetase, N-terminal domain"/>
    <property type="match status" value="1"/>
</dbReference>
<dbReference type="Gene3D" id="3.30.590.10">
    <property type="entry name" value="Glutamine synthetase/guanido kinase, catalytic domain"/>
    <property type="match status" value="1"/>
</dbReference>
<dbReference type="InterPro" id="IPR008147">
    <property type="entry name" value="Gln_synt_N"/>
</dbReference>
<dbReference type="InterPro" id="IPR036651">
    <property type="entry name" value="Gln_synt_N_sf"/>
</dbReference>
<dbReference type="InterPro" id="IPR014746">
    <property type="entry name" value="Gln_synth/guanido_kin_cat_dom"/>
</dbReference>
<dbReference type="InterPro" id="IPR008146">
    <property type="entry name" value="Gln_synth_cat_dom"/>
</dbReference>
<dbReference type="InterPro" id="IPR027303">
    <property type="entry name" value="Gln_synth_gly_rich_site"/>
</dbReference>
<dbReference type="InterPro" id="IPR004809">
    <property type="entry name" value="Gln_synth_I"/>
</dbReference>
<dbReference type="InterPro" id="IPR027302">
    <property type="entry name" value="Gln_synth_N_conserv_site"/>
</dbReference>
<dbReference type="NCBIfam" id="TIGR00653">
    <property type="entry name" value="GlnA"/>
    <property type="match status" value="1"/>
</dbReference>
<dbReference type="PANTHER" id="PTHR43785">
    <property type="entry name" value="GAMMA-GLUTAMYLPUTRESCINE SYNTHETASE"/>
    <property type="match status" value="1"/>
</dbReference>
<dbReference type="PANTHER" id="PTHR43785:SF12">
    <property type="entry name" value="TYPE-1 GLUTAMINE SYNTHETASE 2"/>
    <property type="match status" value="1"/>
</dbReference>
<dbReference type="Pfam" id="PF00120">
    <property type="entry name" value="Gln-synt_C"/>
    <property type="match status" value="1"/>
</dbReference>
<dbReference type="Pfam" id="PF03951">
    <property type="entry name" value="Gln-synt_N"/>
    <property type="match status" value="1"/>
</dbReference>
<dbReference type="SMART" id="SM01230">
    <property type="entry name" value="Gln-synt_C"/>
    <property type="match status" value="1"/>
</dbReference>
<dbReference type="SUPFAM" id="SSF54368">
    <property type="entry name" value="Glutamine synthetase, N-terminal domain"/>
    <property type="match status" value="1"/>
</dbReference>
<dbReference type="SUPFAM" id="SSF55931">
    <property type="entry name" value="Glutamine synthetase/guanido kinase"/>
    <property type="match status" value="1"/>
</dbReference>
<dbReference type="PROSITE" id="PS00180">
    <property type="entry name" value="GLNA_1"/>
    <property type="match status" value="1"/>
</dbReference>
<dbReference type="PROSITE" id="PS00181">
    <property type="entry name" value="GLNA_ATP"/>
    <property type="match status" value="1"/>
</dbReference>
<dbReference type="PROSITE" id="PS51986">
    <property type="entry name" value="GS_BETA_GRASP"/>
    <property type="match status" value="1"/>
</dbReference>
<dbReference type="PROSITE" id="PS51987">
    <property type="entry name" value="GS_CATALYTIC"/>
    <property type="match status" value="1"/>
</dbReference>
<evidence type="ECO:0000250" key="1">
    <source>
        <dbReference type="UniProtKB" id="P0A1P6"/>
    </source>
</evidence>
<evidence type="ECO:0000250" key="2">
    <source>
        <dbReference type="UniProtKB" id="P12425"/>
    </source>
</evidence>
<evidence type="ECO:0000250" key="3">
    <source>
        <dbReference type="UniProtKB" id="P77961"/>
    </source>
</evidence>
<evidence type="ECO:0000250" key="4">
    <source>
        <dbReference type="UniProtKB" id="P9WN39"/>
    </source>
</evidence>
<evidence type="ECO:0000250" key="5">
    <source>
        <dbReference type="UniProtKB" id="Q9HH09"/>
    </source>
</evidence>
<evidence type="ECO:0000255" key="6">
    <source>
        <dbReference type="PROSITE-ProRule" id="PRU01330"/>
    </source>
</evidence>
<evidence type="ECO:0000255" key="7">
    <source>
        <dbReference type="PROSITE-ProRule" id="PRU01331"/>
    </source>
</evidence>
<comment type="function">
    <text evidence="5">Probably involved in nitrogen metabolism via ammonium assimilation. Catalyzes the ATP-dependent biosynthesis of glutamine from glutamate and ammonia.</text>
</comment>
<comment type="catalytic activity">
    <reaction evidence="5">
        <text>L-glutamate + NH4(+) + ATP = L-glutamine + ADP + phosphate + H(+)</text>
        <dbReference type="Rhea" id="RHEA:16169"/>
        <dbReference type="ChEBI" id="CHEBI:15378"/>
        <dbReference type="ChEBI" id="CHEBI:28938"/>
        <dbReference type="ChEBI" id="CHEBI:29985"/>
        <dbReference type="ChEBI" id="CHEBI:30616"/>
        <dbReference type="ChEBI" id="CHEBI:43474"/>
        <dbReference type="ChEBI" id="CHEBI:58359"/>
        <dbReference type="ChEBI" id="CHEBI:456216"/>
        <dbReference type="EC" id="6.3.1.2"/>
    </reaction>
</comment>
<comment type="cofactor">
    <cofactor evidence="5">
        <name>Mg(2+)</name>
        <dbReference type="ChEBI" id="CHEBI:18420"/>
    </cofactor>
    <text evidence="4">Binds 2 Mg(2+) ions per subunit.</text>
</comment>
<comment type="subunit">
    <text evidence="5">Oligomer of 12 subunits arranged in the form of two hexagons.</text>
</comment>
<comment type="subcellular location">
    <subcellularLocation>
        <location evidence="5">Cytoplasm</location>
    </subcellularLocation>
</comment>
<comment type="similarity">
    <text evidence="5">Belongs to the glutamine synthetase family.</text>
</comment>